<organism>
    <name type="scientific">Shewanella baltica (strain OS223)</name>
    <dbReference type="NCBI Taxonomy" id="407976"/>
    <lineage>
        <taxon>Bacteria</taxon>
        <taxon>Pseudomonadati</taxon>
        <taxon>Pseudomonadota</taxon>
        <taxon>Gammaproteobacteria</taxon>
        <taxon>Alteromonadales</taxon>
        <taxon>Shewanellaceae</taxon>
        <taxon>Shewanella</taxon>
    </lineage>
</organism>
<comment type="function">
    <text evidence="1">Binds to DNA and alters its conformation. May be involved in regulation of gene expression, nucleoid organization and DNA protection.</text>
</comment>
<comment type="subunit">
    <text evidence="1">Homodimer.</text>
</comment>
<comment type="subcellular location">
    <subcellularLocation>
        <location evidence="1">Cytoplasm</location>
        <location evidence="1">Nucleoid</location>
    </subcellularLocation>
</comment>
<comment type="similarity">
    <text evidence="1">Belongs to the YbaB/EbfC family.</text>
</comment>
<evidence type="ECO:0000255" key="1">
    <source>
        <dbReference type="HAMAP-Rule" id="MF_00274"/>
    </source>
</evidence>
<feature type="chain" id="PRO_1000197675" description="Nucleoid-associated protein Sbal223_1770">
    <location>
        <begin position="1"/>
        <end position="109"/>
    </location>
</feature>
<reference key="1">
    <citation type="submission" date="2008-12" db="EMBL/GenBank/DDBJ databases">
        <title>Complete sequence of chromosome of Shewanella baltica OS223.</title>
        <authorList>
            <consortium name="US DOE Joint Genome Institute"/>
            <person name="Lucas S."/>
            <person name="Copeland A."/>
            <person name="Lapidus A."/>
            <person name="Glavina del Rio T."/>
            <person name="Dalin E."/>
            <person name="Tice H."/>
            <person name="Bruce D."/>
            <person name="Goodwin L."/>
            <person name="Pitluck S."/>
            <person name="Chertkov O."/>
            <person name="Meincke L."/>
            <person name="Brettin T."/>
            <person name="Detter J.C."/>
            <person name="Han C."/>
            <person name="Kuske C.R."/>
            <person name="Larimer F."/>
            <person name="Land M."/>
            <person name="Hauser L."/>
            <person name="Kyrpides N."/>
            <person name="Ovchinnikova G."/>
            <person name="Brettar I."/>
            <person name="Rodrigues J."/>
            <person name="Konstantinidis K."/>
            <person name="Tiedje J."/>
        </authorList>
    </citation>
    <scope>NUCLEOTIDE SEQUENCE [LARGE SCALE GENOMIC DNA]</scope>
    <source>
        <strain>OS223</strain>
    </source>
</reference>
<name>Y1770_SHEB2</name>
<accession>B8E702</accession>
<sequence length="109" mass="11966">MFGKGGMGNLMKQAQMMQEKMAKVQEEIARMEMVGESGAGLVKVTMTGAHTVRKVEIDPSLMEDDKEMLEDLIAAACNDAARRIEENQKTKMAEVTGGMQLPPGMKMPF</sequence>
<keyword id="KW-0963">Cytoplasm</keyword>
<keyword id="KW-0238">DNA-binding</keyword>
<gene>
    <name type="ordered locus">Sbal223_1770</name>
</gene>
<proteinExistence type="inferred from homology"/>
<protein>
    <recommendedName>
        <fullName evidence="1">Nucleoid-associated protein Sbal223_1770</fullName>
    </recommendedName>
</protein>
<dbReference type="EMBL" id="CP001252">
    <property type="protein sequence ID" value="ACK46275.1"/>
    <property type="molecule type" value="Genomic_DNA"/>
</dbReference>
<dbReference type="RefSeq" id="WP_006082082.1">
    <property type="nucleotide sequence ID" value="NC_011663.1"/>
</dbReference>
<dbReference type="SMR" id="B8E702"/>
<dbReference type="KEGG" id="sbp:Sbal223_1770"/>
<dbReference type="HOGENOM" id="CLU_140930_0_0_6"/>
<dbReference type="Proteomes" id="UP000002507">
    <property type="component" value="Chromosome"/>
</dbReference>
<dbReference type="GO" id="GO:0043590">
    <property type="term" value="C:bacterial nucleoid"/>
    <property type="evidence" value="ECO:0007669"/>
    <property type="project" value="UniProtKB-UniRule"/>
</dbReference>
<dbReference type="GO" id="GO:0005829">
    <property type="term" value="C:cytosol"/>
    <property type="evidence" value="ECO:0007669"/>
    <property type="project" value="TreeGrafter"/>
</dbReference>
<dbReference type="GO" id="GO:0003677">
    <property type="term" value="F:DNA binding"/>
    <property type="evidence" value="ECO:0007669"/>
    <property type="project" value="UniProtKB-UniRule"/>
</dbReference>
<dbReference type="FunFam" id="3.30.1310.10:FF:000001">
    <property type="entry name" value="Nucleoid-associated protein YbaB"/>
    <property type="match status" value="1"/>
</dbReference>
<dbReference type="Gene3D" id="3.30.1310.10">
    <property type="entry name" value="Nucleoid-associated protein YbaB-like domain"/>
    <property type="match status" value="1"/>
</dbReference>
<dbReference type="HAMAP" id="MF_00274">
    <property type="entry name" value="DNA_YbaB_EbfC"/>
    <property type="match status" value="1"/>
</dbReference>
<dbReference type="InterPro" id="IPR036894">
    <property type="entry name" value="YbaB-like_sf"/>
</dbReference>
<dbReference type="InterPro" id="IPR004401">
    <property type="entry name" value="YbaB/EbfC"/>
</dbReference>
<dbReference type="NCBIfam" id="TIGR00103">
    <property type="entry name" value="DNA_YbaB_EbfC"/>
    <property type="match status" value="1"/>
</dbReference>
<dbReference type="PANTHER" id="PTHR33449">
    <property type="entry name" value="NUCLEOID-ASSOCIATED PROTEIN YBAB"/>
    <property type="match status" value="1"/>
</dbReference>
<dbReference type="PANTHER" id="PTHR33449:SF1">
    <property type="entry name" value="NUCLEOID-ASSOCIATED PROTEIN YBAB"/>
    <property type="match status" value="1"/>
</dbReference>
<dbReference type="Pfam" id="PF02575">
    <property type="entry name" value="YbaB_DNA_bd"/>
    <property type="match status" value="1"/>
</dbReference>
<dbReference type="PIRSF" id="PIRSF004555">
    <property type="entry name" value="UCP004555"/>
    <property type="match status" value="1"/>
</dbReference>
<dbReference type="SUPFAM" id="SSF82607">
    <property type="entry name" value="YbaB-like"/>
    <property type="match status" value="1"/>
</dbReference>